<feature type="chain" id="PRO_0000321640" description="Octanoyltransferase">
    <location>
        <begin position="1"/>
        <end position="216"/>
    </location>
</feature>
<feature type="domain" description="BPL/LPL catalytic" evidence="2">
    <location>
        <begin position="33"/>
        <end position="216"/>
    </location>
</feature>
<feature type="active site" description="Acyl-thioester intermediate" evidence="1">
    <location>
        <position position="180"/>
    </location>
</feature>
<feature type="binding site" evidence="1">
    <location>
        <begin position="72"/>
        <end position="79"/>
    </location>
    <ligand>
        <name>substrate</name>
    </ligand>
</feature>
<feature type="binding site" evidence="1">
    <location>
        <begin position="148"/>
        <end position="150"/>
    </location>
    <ligand>
        <name>substrate</name>
    </ligand>
</feature>
<feature type="binding site" evidence="1">
    <location>
        <begin position="162"/>
        <end position="164"/>
    </location>
    <ligand>
        <name>substrate</name>
    </ligand>
</feature>
<feature type="site" description="Lowers pKa of active site Cys" evidence="1">
    <location>
        <position position="145"/>
    </location>
</feature>
<organism>
    <name type="scientific">Janthinobacterium sp. (strain Marseille)</name>
    <name type="common">Minibacterium massiliensis</name>
    <dbReference type="NCBI Taxonomy" id="375286"/>
    <lineage>
        <taxon>Bacteria</taxon>
        <taxon>Pseudomonadati</taxon>
        <taxon>Pseudomonadota</taxon>
        <taxon>Betaproteobacteria</taxon>
        <taxon>Burkholderiales</taxon>
        <taxon>Oxalobacteraceae</taxon>
        <taxon>Janthinobacterium</taxon>
    </lineage>
</organism>
<gene>
    <name evidence="1" type="primary">lipB</name>
    <name type="ordered locus">mma_3251</name>
</gene>
<comment type="function">
    <text evidence="1">Catalyzes the transfer of endogenously produced octanoic acid from octanoyl-acyl-carrier-protein onto the lipoyl domains of lipoate-dependent enzymes. Lipoyl-ACP can also act as a substrate although octanoyl-ACP is likely to be the physiological substrate.</text>
</comment>
<comment type="catalytic activity">
    <reaction evidence="1">
        <text>octanoyl-[ACP] + L-lysyl-[protein] = N(6)-octanoyl-L-lysyl-[protein] + holo-[ACP] + H(+)</text>
        <dbReference type="Rhea" id="RHEA:17665"/>
        <dbReference type="Rhea" id="RHEA-COMP:9636"/>
        <dbReference type="Rhea" id="RHEA-COMP:9685"/>
        <dbReference type="Rhea" id="RHEA-COMP:9752"/>
        <dbReference type="Rhea" id="RHEA-COMP:9928"/>
        <dbReference type="ChEBI" id="CHEBI:15378"/>
        <dbReference type="ChEBI" id="CHEBI:29969"/>
        <dbReference type="ChEBI" id="CHEBI:64479"/>
        <dbReference type="ChEBI" id="CHEBI:78463"/>
        <dbReference type="ChEBI" id="CHEBI:78809"/>
        <dbReference type="EC" id="2.3.1.181"/>
    </reaction>
</comment>
<comment type="pathway">
    <text evidence="1">Protein modification; protein lipoylation via endogenous pathway; protein N(6)-(lipoyl)lysine from octanoyl-[acyl-carrier-protein]: step 1/2.</text>
</comment>
<comment type="subcellular location">
    <subcellularLocation>
        <location evidence="1">Cytoplasm</location>
    </subcellularLocation>
</comment>
<comment type="miscellaneous">
    <text evidence="1">In the reaction, the free carboxyl group of octanoic acid is attached via an amide linkage to the epsilon-amino group of a specific lysine residue of lipoyl domains of lipoate-dependent enzymes.</text>
</comment>
<comment type="similarity">
    <text evidence="1">Belongs to the LipB family.</text>
</comment>
<name>LIPB_JANMA</name>
<accession>A6T344</accession>
<sequence>MSVPQQPLILQRGLEAYETTFAAMRAFTDARTAATADELWIVEHPPVFTLGLAADPSHVLDPHQIPVVETDRGGEVTYHGPGQVVIYLLLDLRRHKADARLFARELVNKIEQSVIDTLAAYNLACERKPGAPGIYMSDGPAQGAKIAALGLKIRGNGCTYHGVSLNVAMDLTPFTWINPCGYEDLATIDMQSLGAQTTLAEVQNALANRLSTSLSR</sequence>
<protein>
    <recommendedName>
        <fullName evidence="1">Octanoyltransferase</fullName>
        <ecNumber evidence="1">2.3.1.181</ecNumber>
    </recommendedName>
    <alternativeName>
        <fullName evidence="1">Lipoate-protein ligase B</fullName>
    </alternativeName>
    <alternativeName>
        <fullName evidence="1">Lipoyl/octanoyl transferase</fullName>
    </alternativeName>
    <alternativeName>
        <fullName evidence="1">Octanoyl-[acyl-carrier-protein]-protein N-octanoyltransferase</fullName>
    </alternativeName>
</protein>
<dbReference type="EC" id="2.3.1.181" evidence="1"/>
<dbReference type="EMBL" id="CP000269">
    <property type="protein sequence ID" value="ABR89547.1"/>
    <property type="molecule type" value="Genomic_DNA"/>
</dbReference>
<dbReference type="RefSeq" id="WP_012081094.1">
    <property type="nucleotide sequence ID" value="NC_009659.1"/>
</dbReference>
<dbReference type="SMR" id="A6T344"/>
<dbReference type="STRING" id="375286.mma_3251"/>
<dbReference type="KEGG" id="mms:mma_3251"/>
<dbReference type="eggNOG" id="COG0321">
    <property type="taxonomic scope" value="Bacteria"/>
</dbReference>
<dbReference type="HOGENOM" id="CLU_035168_3_1_4"/>
<dbReference type="OrthoDB" id="9787061at2"/>
<dbReference type="UniPathway" id="UPA00538">
    <property type="reaction ID" value="UER00592"/>
</dbReference>
<dbReference type="Proteomes" id="UP000006388">
    <property type="component" value="Chromosome"/>
</dbReference>
<dbReference type="GO" id="GO:0005737">
    <property type="term" value="C:cytoplasm"/>
    <property type="evidence" value="ECO:0007669"/>
    <property type="project" value="UniProtKB-SubCell"/>
</dbReference>
<dbReference type="GO" id="GO:0033819">
    <property type="term" value="F:lipoyl(octanoyl) transferase activity"/>
    <property type="evidence" value="ECO:0007669"/>
    <property type="project" value="UniProtKB-EC"/>
</dbReference>
<dbReference type="GO" id="GO:0036211">
    <property type="term" value="P:protein modification process"/>
    <property type="evidence" value="ECO:0007669"/>
    <property type="project" value="InterPro"/>
</dbReference>
<dbReference type="CDD" id="cd16444">
    <property type="entry name" value="LipB"/>
    <property type="match status" value="1"/>
</dbReference>
<dbReference type="FunFam" id="3.30.930.10:FF:000020">
    <property type="entry name" value="Octanoyltransferase"/>
    <property type="match status" value="1"/>
</dbReference>
<dbReference type="Gene3D" id="3.30.930.10">
    <property type="entry name" value="Bira Bifunctional Protein, Domain 2"/>
    <property type="match status" value="1"/>
</dbReference>
<dbReference type="HAMAP" id="MF_00013">
    <property type="entry name" value="LipB"/>
    <property type="match status" value="1"/>
</dbReference>
<dbReference type="InterPro" id="IPR045864">
    <property type="entry name" value="aa-tRNA-synth_II/BPL/LPL"/>
</dbReference>
<dbReference type="InterPro" id="IPR004143">
    <property type="entry name" value="BPL_LPL_catalytic"/>
</dbReference>
<dbReference type="InterPro" id="IPR000544">
    <property type="entry name" value="Octanoyltransferase"/>
</dbReference>
<dbReference type="InterPro" id="IPR020605">
    <property type="entry name" value="Octanoyltransferase_CS"/>
</dbReference>
<dbReference type="NCBIfam" id="TIGR00214">
    <property type="entry name" value="lipB"/>
    <property type="match status" value="1"/>
</dbReference>
<dbReference type="NCBIfam" id="NF010922">
    <property type="entry name" value="PRK14342.1"/>
    <property type="match status" value="1"/>
</dbReference>
<dbReference type="NCBIfam" id="NF010923">
    <property type="entry name" value="PRK14343.1"/>
    <property type="match status" value="1"/>
</dbReference>
<dbReference type="PANTHER" id="PTHR10993:SF7">
    <property type="entry name" value="LIPOYLTRANSFERASE 2, MITOCHONDRIAL-RELATED"/>
    <property type="match status" value="1"/>
</dbReference>
<dbReference type="PANTHER" id="PTHR10993">
    <property type="entry name" value="OCTANOYLTRANSFERASE"/>
    <property type="match status" value="1"/>
</dbReference>
<dbReference type="Pfam" id="PF21948">
    <property type="entry name" value="LplA-B_cat"/>
    <property type="match status" value="1"/>
</dbReference>
<dbReference type="PIRSF" id="PIRSF016262">
    <property type="entry name" value="LPLase"/>
    <property type="match status" value="1"/>
</dbReference>
<dbReference type="SUPFAM" id="SSF55681">
    <property type="entry name" value="Class II aaRS and biotin synthetases"/>
    <property type="match status" value="1"/>
</dbReference>
<dbReference type="PROSITE" id="PS51733">
    <property type="entry name" value="BPL_LPL_CATALYTIC"/>
    <property type="match status" value="1"/>
</dbReference>
<dbReference type="PROSITE" id="PS01313">
    <property type="entry name" value="LIPB"/>
    <property type="match status" value="1"/>
</dbReference>
<reference key="1">
    <citation type="journal article" date="2007" name="PLoS Genet.">
        <title>Genome analysis of Minibacterium massiliensis highlights the convergent evolution of water-living bacteria.</title>
        <authorList>
            <person name="Audic S."/>
            <person name="Robert C."/>
            <person name="Campagna B."/>
            <person name="Parinello H."/>
            <person name="Claverie J.-M."/>
            <person name="Raoult D."/>
            <person name="Drancourt M."/>
        </authorList>
    </citation>
    <scope>NUCLEOTIDE SEQUENCE [LARGE SCALE GENOMIC DNA]</scope>
    <source>
        <strain>Marseille</strain>
    </source>
</reference>
<keyword id="KW-0012">Acyltransferase</keyword>
<keyword id="KW-0963">Cytoplasm</keyword>
<keyword id="KW-0808">Transferase</keyword>
<proteinExistence type="inferred from homology"/>
<evidence type="ECO:0000255" key="1">
    <source>
        <dbReference type="HAMAP-Rule" id="MF_00013"/>
    </source>
</evidence>
<evidence type="ECO:0000255" key="2">
    <source>
        <dbReference type="PROSITE-ProRule" id="PRU01067"/>
    </source>
</evidence>